<reference key="1">
    <citation type="journal article" date="2006" name="Proc. Natl. Acad. Sci. U.S.A.">
        <title>Identification of genes subject to positive selection in uropathogenic strains of Escherichia coli: a comparative genomics approach.</title>
        <authorList>
            <person name="Chen S.L."/>
            <person name="Hung C.-S."/>
            <person name="Xu J."/>
            <person name="Reigstad C.S."/>
            <person name="Magrini V."/>
            <person name="Sabo A."/>
            <person name="Blasiar D."/>
            <person name="Bieri T."/>
            <person name="Meyer R.R."/>
            <person name="Ozersky P."/>
            <person name="Armstrong J.R."/>
            <person name="Fulton R.S."/>
            <person name="Latreille J.P."/>
            <person name="Spieth J."/>
            <person name="Hooton T.M."/>
            <person name="Mardis E.R."/>
            <person name="Hultgren S.J."/>
            <person name="Gordon J.I."/>
        </authorList>
    </citation>
    <scope>NUCLEOTIDE SEQUENCE [LARGE SCALE GENOMIC DNA]</scope>
    <source>
        <strain>UTI89 / UPEC</strain>
    </source>
</reference>
<keyword id="KW-0378">Hydrolase</keyword>
<keyword id="KW-0460">Magnesium</keyword>
<feature type="chain" id="PRO_0000342640" description="Phosphatase NudJ">
    <location>
        <begin position="1"/>
        <end position="153"/>
    </location>
</feature>
<feature type="domain" description="Nudix hydrolase" evidence="2">
    <location>
        <begin position="3"/>
        <end position="131"/>
    </location>
</feature>
<feature type="short sequence motif" description="Nudix box">
    <location>
        <begin position="36"/>
        <end position="57"/>
    </location>
</feature>
<name>NUDJ_ECOUT</name>
<gene>
    <name type="primary">nudJ</name>
    <name type="ordered locus">UTI89_C1263</name>
</gene>
<sequence length="153" mass="17433">MFKPHVTVACVVHAEGKFLVVEETINGKALWNQPAGHLEADETLVEAAARELWEETGISAQPQHFIRMHQWIAPDKTPFLRFLFAIELEQICPTQPHDSDIDCCRWVSAEEILQASNLRSPLVAESIRCYQSGQRYPLEMIGDFNWPFTKGVI</sequence>
<organism>
    <name type="scientific">Escherichia coli (strain UTI89 / UPEC)</name>
    <dbReference type="NCBI Taxonomy" id="364106"/>
    <lineage>
        <taxon>Bacteria</taxon>
        <taxon>Pseudomonadati</taxon>
        <taxon>Pseudomonadota</taxon>
        <taxon>Gammaproteobacteria</taxon>
        <taxon>Enterobacterales</taxon>
        <taxon>Enterobacteriaceae</taxon>
        <taxon>Escherichia</taxon>
    </lineage>
</organism>
<evidence type="ECO:0000250" key="1"/>
<evidence type="ECO:0000255" key="2">
    <source>
        <dbReference type="PROSITE-ProRule" id="PRU00794"/>
    </source>
</evidence>
<evidence type="ECO:0000305" key="3"/>
<dbReference type="EC" id="3.6.1.-"/>
<dbReference type="EMBL" id="CP000243">
    <property type="protein sequence ID" value="ABE06745.1"/>
    <property type="molecule type" value="Genomic_DNA"/>
</dbReference>
<dbReference type="RefSeq" id="WP_000476093.1">
    <property type="nucleotide sequence ID" value="NZ_CP064825.1"/>
</dbReference>
<dbReference type="SMR" id="Q1RD19"/>
<dbReference type="GeneID" id="75203720"/>
<dbReference type="KEGG" id="eci:UTI89_C1263"/>
<dbReference type="HOGENOM" id="CLU_037162_6_1_6"/>
<dbReference type="Proteomes" id="UP000001952">
    <property type="component" value="Chromosome"/>
</dbReference>
<dbReference type="GO" id="GO:0017110">
    <property type="term" value="F:nucleoside diphosphate phosphatase activity"/>
    <property type="evidence" value="ECO:0007669"/>
    <property type="project" value="InterPro"/>
</dbReference>
<dbReference type="GO" id="GO:0017111">
    <property type="term" value="F:ribonucleoside triphosphate phosphatase activity"/>
    <property type="evidence" value="ECO:0007669"/>
    <property type="project" value="InterPro"/>
</dbReference>
<dbReference type="GO" id="GO:0004787">
    <property type="term" value="F:thiamine diphosphate phosphatase activity"/>
    <property type="evidence" value="ECO:0007669"/>
    <property type="project" value="InterPro"/>
</dbReference>
<dbReference type="CDD" id="cd03675">
    <property type="entry name" value="NUDIX_Hydrolase"/>
    <property type="match status" value="1"/>
</dbReference>
<dbReference type="FunFam" id="3.90.79.10:FF:000017">
    <property type="entry name" value="Phosphatase NudJ"/>
    <property type="match status" value="1"/>
</dbReference>
<dbReference type="Gene3D" id="3.90.79.10">
    <property type="entry name" value="Nucleoside Triphosphate Pyrophosphohydrolase"/>
    <property type="match status" value="1"/>
</dbReference>
<dbReference type="InterPro" id="IPR020476">
    <property type="entry name" value="Nudix_hydrolase"/>
</dbReference>
<dbReference type="InterPro" id="IPR015797">
    <property type="entry name" value="NUDIX_hydrolase-like_dom_sf"/>
</dbReference>
<dbReference type="InterPro" id="IPR020084">
    <property type="entry name" value="NUDIX_hydrolase_CS"/>
</dbReference>
<dbReference type="InterPro" id="IPR000086">
    <property type="entry name" value="NUDIX_hydrolase_dom"/>
</dbReference>
<dbReference type="InterPro" id="IPR033713">
    <property type="entry name" value="NudJ"/>
</dbReference>
<dbReference type="PANTHER" id="PTHR43222">
    <property type="entry name" value="NUDIX HYDROLASE 23"/>
    <property type="match status" value="1"/>
</dbReference>
<dbReference type="PANTHER" id="PTHR43222:SF11">
    <property type="entry name" value="PHOSPHATASE NUDJ"/>
    <property type="match status" value="1"/>
</dbReference>
<dbReference type="Pfam" id="PF00293">
    <property type="entry name" value="NUDIX"/>
    <property type="match status" value="1"/>
</dbReference>
<dbReference type="PRINTS" id="PR00502">
    <property type="entry name" value="NUDIXFAMILY"/>
</dbReference>
<dbReference type="SUPFAM" id="SSF55811">
    <property type="entry name" value="Nudix"/>
    <property type="match status" value="1"/>
</dbReference>
<dbReference type="PROSITE" id="PS51462">
    <property type="entry name" value="NUDIX"/>
    <property type="match status" value="1"/>
</dbReference>
<dbReference type="PROSITE" id="PS00893">
    <property type="entry name" value="NUDIX_BOX"/>
    <property type="match status" value="1"/>
</dbReference>
<accession>Q1RD19</accession>
<proteinExistence type="inferred from homology"/>
<protein>
    <recommendedName>
        <fullName>Phosphatase NudJ</fullName>
        <ecNumber>3.6.1.-</ecNumber>
    </recommendedName>
</protein>
<comment type="cofactor">
    <cofactor evidence="1">
        <name>Mg(2+)</name>
        <dbReference type="ChEBI" id="CHEBI:18420"/>
    </cofactor>
</comment>
<comment type="subunit">
    <text evidence="1">Monomer.</text>
</comment>
<comment type="similarity">
    <text evidence="3">Belongs to the Nudix hydrolase family. NudJ subfamily.</text>
</comment>